<protein>
    <recommendedName>
        <fullName>Putative protease Do-like 14</fullName>
        <ecNumber>3.4.21.-</ecNumber>
    </recommendedName>
</protein>
<organism>
    <name type="scientific">Arabidopsis thaliana</name>
    <name type="common">Mouse-ear cress</name>
    <dbReference type="NCBI Taxonomy" id="3702"/>
    <lineage>
        <taxon>Eukaryota</taxon>
        <taxon>Viridiplantae</taxon>
        <taxon>Streptophyta</taxon>
        <taxon>Embryophyta</taxon>
        <taxon>Tracheophyta</taxon>
        <taxon>Spermatophyta</taxon>
        <taxon>Magnoliopsida</taxon>
        <taxon>eudicotyledons</taxon>
        <taxon>Gunneridae</taxon>
        <taxon>Pentapetalae</taxon>
        <taxon>rosids</taxon>
        <taxon>malvids</taxon>
        <taxon>Brassicales</taxon>
        <taxon>Brassicaceae</taxon>
        <taxon>Camelineae</taxon>
        <taxon>Arabidopsis</taxon>
    </lineage>
</organism>
<feature type="chain" id="PRO_0000093865" description="Putative protease Do-like 14">
    <location>
        <begin position="1"/>
        <end position="429"/>
    </location>
</feature>
<feature type="domain" description="PDZ" evidence="2">
    <location>
        <begin position="318"/>
        <end position="424"/>
    </location>
</feature>
<feature type="region of interest" description="Disordered" evidence="3">
    <location>
        <begin position="87"/>
        <end position="113"/>
    </location>
</feature>
<feature type="region of interest" description="Serine protease">
    <location>
        <begin position="113"/>
        <end position="338"/>
    </location>
</feature>
<feature type="active site" description="Charge relay system" evidence="1">
    <location>
        <position position="165"/>
    </location>
</feature>
<feature type="active site" description="Charge relay system" evidence="1">
    <location>
        <position position="203"/>
    </location>
</feature>
<feature type="active site" description="Charge relay system" evidence="1">
    <location>
        <position position="281"/>
    </location>
</feature>
<proteinExistence type="inferred from homology"/>
<reference key="1">
    <citation type="journal article" date="2000" name="Nature">
        <title>Sequence and analysis of chromosome 5 of the plant Arabidopsis thaliana.</title>
        <authorList>
            <person name="Tabata S."/>
            <person name="Kaneko T."/>
            <person name="Nakamura Y."/>
            <person name="Kotani H."/>
            <person name="Kato T."/>
            <person name="Asamizu E."/>
            <person name="Miyajima N."/>
            <person name="Sasamoto S."/>
            <person name="Kimura T."/>
            <person name="Hosouchi T."/>
            <person name="Kawashima K."/>
            <person name="Kohara M."/>
            <person name="Matsumoto M."/>
            <person name="Matsuno A."/>
            <person name="Muraki A."/>
            <person name="Nakayama S."/>
            <person name="Nakazaki N."/>
            <person name="Naruo K."/>
            <person name="Okumura S."/>
            <person name="Shinpo S."/>
            <person name="Takeuchi C."/>
            <person name="Wada T."/>
            <person name="Watanabe A."/>
            <person name="Yamada M."/>
            <person name="Yasuda M."/>
            <person name="Sato S."/>
            <person name="de la Bastide M."/>
            <person name="Huang E."/>
            <person name="Spiegel L."/>
            <person name="Gnoj L."/>
            <person name="O'Shaughnessy A."/>
            <person name="Preston R."/>
            <person name="Habermann K."/>
            <person name="Murray J."/>
            <person name="Johnson D."/>
            <person name="Rohlfing T."/>
            <person name="Nelson J."/>
            <person name="Stoneking T."/>
            <person name="Pepin K."/>
            <person name="Spieth J."/>
            <person name="Sekhon M."/>
            <person name="Armstrong J."/>
            <person name="Becker M."/>
            <person name="Belter E."/>
            <person name="Cordum H."/>
            <person name="Cordes M."/>
            <person name="Courtney L."/>
            <person name="Courtney W."/>
            <person name="Dante M."/>
            <person name="Du H."/>
            <person name="Edwards J."/>
            <person name="Fryman J."/>
            <person name="Haakensen B."/>
            <person name="Lamar E."/>
            <person name="Latreille P."/>
            <person name="Leonard S."/>
            <person name="Meyer R."/>
            <person name="Mulvaney E."/>
            <person name="Ozersky P."/>
            <person name="Riley A."/>
            <person name="Strowmatt C."/>
            <person name="Wagner-McPherson C."/>
            <person name="Wollam A."/>
            <person name="Yoakum M."/>
            <person name="Bell M."/>
            <person name="Dedhia N."/>
            <person name="Parnell L."/>
            <person name="Shah R."/>
            <person name="Rodriguez M."/>
            <person name="Hoon See L."/>
            <person name="Vil D."/>
            <person name="Baker J."/>
            <person name="Kirchoff K."/>
            <person name="Toth K."/>
            <person name="King L."/>
            <person name="Bahret A."/>
            <person name="Miller B."/>
            <person name="Marra M.A."/>
            <person name="Martienssen R."/>
            <person name="McCombie W.R."/>
            <person name="Wilson R.K."/>
            <person name="Murphy G."/>
            <person name="Bancroft I."/>
            <person name="Volckaert G."/>
            <person name="Wambutt R."/>
            <person name="Duesterhoeft A."/>
            <person name="Stiekema W."/>
            <person name="Pohl T."/>
            <person name="Entian K.-D."/>
            <person name="Terryn N."/>
            <person name="Hartley N."/>
            <person name="Bent E."/>
            <person name="Johnson S."/>
            <person name="Langham S.-A."/>
            <person name="McCullagh B."/>
            <person name="Robben J."/>
            <person name="Grymonprez B."/>
            <person name="Zimmermann W."/>
            <person name="Ramsperger U."/>
            <person name="Wedler H."/>
            <person name="Balke K."/>
            <person name="Wedler E."/>
            <person name="Peters S."/>
            <person name="van Staveren M."/>
            <person name="Dirkse W."/>
            <person name="Mooijman P."/>
            <person name="Klein Lankhorst R."/>
            <person name="Weitzenegger T."/>
            <person name="Bothe G."/>
            <person name="Rose M."/>
            <person name="Hauf J."/>
            <person name="Berneiser S."/>
            <person name="Hempel S."/>
            <person name="Feldpausch M."/>
            <person name="Lamberth S."/>
            <person name="Villarroel R."/>
            <person name="Gielen J."/>
            <person name="Ardiles W."/>
            <person name="Bents O."/>
            <person name="Lemcke K."/>
            <person name="Kolesov G."/>
            <person name="Mayer K.F.X."/>
            <person name="Rudd S."/>
            <person name="Schoof H."/>
            <person name="Schueller C."/>
            <person name="Zaccaria P."/>
            <person name="Mewes H.-W."/>
            <person name="Bevan M."/>
            <person name="Fransz P.F."/>
        </authorList>
    </citation>
    <scope>NUCLEOTIDE SEQUENCE [LARGE SCALE GENOMIC DNA]</scope>
    <source>
        <strain>cv. Columbia</strain>
    </source>
</reference>
<reference key="2">
    <citation type="journal article" date="2017" name="Plant J.">
        <title>Araport11: a complete reannotation of the Arabidopsis thaliana reference genome.</title>
        <authorList>
            <person name="Cheng C.Y."/>
            <person name="Krishnakumar V."/>
            <person name="Chan A.P."/>
            <person name="Thibaud-Nissen F."/>
            <person name="Schobel S."/>
            <person name="Town C.D."/>
        </authorList>
    </citation>
    <scope>GENOME REANNOTATION</scope>
    <source>
        <strain>cv. Columbia</strain>
    </source>
</reference>
<accession>Q3E6S8</accession>
<accession>F4K4D7</accession>
<sequence>MMNFLRRAVSSSKRSELIRIISVATATSGILYASTNPDARTRVSLAIPESVRESLSLLPWQISPGLIHRPEQSLFGNFVFSSRVSPKSEAPINDEKGVSVEASDSSSKPSNGYLGRDTIANAAARIGPAVVNLSVPQGFHGISMGKSIGSGTIIDADGTILTCAHVVVDFQNIRHSSKGRVDVTLQDGRTFEGVVVNADLQSDIALVKIKSKTPLPTAKLGFSSKLRPGDWVIAVGCPLSLQNTVTAGIVSCVDRKSSDLGLGGKHREYLQTDCSINAGNSGGPLVNLDGEVIGVNIMKVLAADGLGFSVPIDSVSKIIEHFKKSGRVIRPWIGLKMVELNNLIVAQLKERDPMFPDVERGVLVPTVIPGSPADRAGFKPGDVVVRFDGKPVIEIMDDRVGKRMQVVVERSNKERVTLEVIPEEANPDM</sequence>
<gene>
    <name type="primary">DEGP14</name>
    <name type="ordered locus">At5g27660</name>
    <name type="ORF">F15A18.120</name>
    <name type="ORF">T1G16.1</name>
</gene>
<dbReference type="EC" id="3.4.21.-"/>
<dbReference type="EMBL" id="AC007478">
    <property type="status" value="NOT_ANNOTATED_CDS"/>
    <property type="molecule type" value="Genomic_DNA"/>
</dbReference>
<dbReference type="EMBL" id="AC069556">
    <property type="status" value="NOT_ANNOTATED_CDS"/>
    <property type="molecule type" value="Genomic_DNA"/>
</dbReference>
<dbReference type="EMBL" id="CP002688">
    <property type="status" value="NOT_ANNOTATED_CDS"/>
    <property type="molecule type" value="Genomic_DNA"/>
</dbReference>
<dbReference type="SMR" id="Q3E6S8"/>
<dbReference type="FunCoup" id="Q3E6S8">
    <property type="interactions" value="1325"/>
</dbReference>
<dbReference type="STRING" id="3702.Q3E6S8"/>
<dbReference type="MEROPS" id="S01.A08"/>
<dbReference type="PaxDb" id="3702-AT5G27660.1"/>
<dbReference type="PeptideAtlas" id="Q3E6S8"/>
<dbReference type="Araport" id="AT5G27660"/>
<dbReference type="TAIR" id="AT5G27660">
    <property type="gene designation" value="DEG14"/>
</dbReference>
<dbReference type="eggNOG" id="KOG1320">
    <property type="taxonomic scope" value="Eukaryota"/>
</dbReference>
<dbReference type="HOGENOM" id="CLU_020120_2_1_1"/>
<dbReference type="InParanoid" id="Q3E6S8"/>
<dbReference type="CD-CODE" id="4299E36E">
    <property type="entry name" value="Nucleolus"/>
</dbReference>
<dbReference type="PRO" id="PR:Q3E6S8"/>
<dbReference type="Proteomes" id="UP000006548">
    <property type="component" value="Chromosome 5"/>
</dbReference>
<dbReference type="ExpressionAtlas" id="Q3E6S8">
    <property type="expression patterns" value="baseline and differential"/>
</dbReference>
<dbReference type="GO" id="GO:0004252">
    <property type="term" value="F:serine-type endopeptidase activity"/>
    <property type="evidence" value="ECO:0000318"/>
    <property type="project" value="GO_Central"/>
</dbReference>
<dbReference type="GO" id="GO:0006508">
    <property type="term" value="P:proteolysis"/>
    <property type="evidence" value="ECO:0000318"/>
    <property type="project" value="GO_Central"/>
</dbReference>
<dbReference type="CDD" id="cd23085">
    <property type="entry name" value="cpPDZ_AtDEGP14-like"/>
    <property type="match status" value="1"/>
</dbReference>
<dbReference type="Gene3D" id="2.30.42.10">
    <property type="match status" value="1"/>
</dbReference>
<dbReference type="Gene3D" id="2.40.10.120">
    <property type="match status" value="1"/>
</dbReference>
<dbReference type="InterPro" id="IPR001478">
    <property type="entry name" value="PDZ"/>
</dbReference>
<dbReference type="InterPro" id="IPR041489">
    <property type="entry name" value="PDZ_6"/>
</dbReference>
<dbReference type="InterPro" id="IPR036034">
    <property type="entry name" value="PDZ_sf"/>
</dbReference>
<dbReference type="InterPro" id="IPR009003">
    <property type="entry name" value="Peptidase_S1_PA"/>
</dbReference>
<dbReference type="InterPro" id="IPR001940">
    <property type="entry name" value="Peptidase_S1C"/>
</dbReference>
<dbReference type="PANTHER" id="PTHR22939:SF125">
    <property type="entry name" value="PROTEASE DO-LIKE 14-RELATED"/>
    <property type="match status" value="1"/>
</dbReference>
<dbReference type="PANTHER" id="PTHR22939">
    <property type="entry name" value="SERINE PROTEASE FAMILY S1C HTRA-RELATED"/>
    <property type="match status" value="1"/>
</dbReference>
<dbReference type="Pfam" id="PF17820">
    <property type="entry name" value="PDZ_6"/>
    <property type="match status" value="1"/>
</dbReference>
<dbReference type="Pfam" id="PF13365">
    <property type="entry name" value="Trypsin_2"/>
    <property type="match status" value="1"/>
</dbReference>
<dbReference type="PRINTS" id="PR00834">
    <property type="entry name" value="PROTEASES2C"/>
</dbReference>
<dbReference type="SMART" id="SM00228">
    <property type="entry name" value="PDZ"/>
    <property type="match status" value="1"/>
</dbReference>
<dbReference type="SUPFAM" id="SSF50156">
    <property type="entry name" value="PDZ domain-like"/>
    <property type="match status" value="1"/>
</dbReference>
<dbReference type="SUPFAM" id="SSF50494">
    <property type="entry name" value="Trypsin-like serine proteases"/>
    <property type="match status" value="1"/>
</dbReference>
<dbReference type="PROSITE" id="PS50106">
    <property type="entry name" value="PDZ"/>
    <property type="match status" value="1"/>
</dbReference>
<evidence type="ECO:0000250" key="1"/>
<evidence type="ECO:0000255" key="2">
    <source>
        <dbReference type="PROSITE-ProRule" id="PRU00143"/>
    </source>
</evidence>
<evidence type="ECO:0000256" key="3">
    <source>
        <dbReference type="SAM" id="MobiDB-lite"/>
    </source>
</evidence>
<evidence type="ECO:0000305" key="4"/>
<name>DGP14_ARATH</name>
<keyword id="KW-0378">Hydrolase</keyword>
<keyword id="KW-0645">Protease</keyword>
<keyword id="KW-1185">Reference proteome</keyword>
<keyword id="KW-0720">Serine protease</keyword>
<comment type="function">
    <text>Putative serine protease.</text>
</comment>
<comment type="similarity">
    <text evidence="4">Belongs to the peptidase S1C family.</text>
</comment>